<name>CARB_NEIMB</name>
<protein>
    <recommendedName>
        <fullName evidence="1">Carbamoyl phosphate synthase large chain</fullName>
        <ecNumber evidence="1">6.3.4.16</ecNumber>
        <ecNumber evidence="1">6.3.5.5</ecNumber>
    </recommendedName>
    <alternativeName>
        <fullName evidence="1">Carbamoyl phosphate synthetase ammonia chain</fullName>
    </alternativeName>
</protein>
<sequence length="1071" mass="117376">MPKRTDLKSILIIGAGPIVIGQACEFDYSGAQACKALREEGYKVILVNSNPATIMTDPEMADVTYIEPIMWQTVEKIIAKERPDAILPTMGGQTALNCALDLARNGVLAKYNVELIGATEDAIDKAEDRGRFKEAMEKIGLSCPKSFVCHTMNEALAAQEQVGFPTLIRPSFTMGGSGGGIAYNKDEFLAICERGFDASPTHELLIEQSVLGWKEYEMEVVRDKNDNCIIICSIENFDPMGVHTGDSITVAPAQTLTDKEYQIMRNASLAVLREIGVDTGGSNVQFAVNPANGEMIVIEMNPRVSRSSALASKATGFPIAKVAAKLAVGFTLDELRNDITGGKTPASFEPSIDYVVTKIPRFAFEKFPAADDRLTTQMKSVGEVMAMGRTIQESFQKALRGLETGLCGFNPRSEDKAEIRRELANPGPERMLFVADAFRAGFTLEEIHEICAIDPWFLAQIEDLMKEEKAVSDGILSDLDFAALRRLKRKGFSDKRLAQLLNVSEKEVREHRYALKLHPVYKRVDTCAAEFATETAYLYSTYEEECESRPSDRKKVMILGGGPNRIGQGIEFDYCCVHAALALRESGFETIMVNCNPETVSTDFDTSDRLYFEPLTLEDVLEIVRTENPWGVIVHYGGQTPLKLANALVENGVNIIGTSADSIDAAEDRERFQKVLNDLGLRQPPNRIAHNEEEALVKAEEIGYPLVVRPSYVLGGRAMQVVHSAEELQKYMREAVQVSEDSPVLLDFFLNNAIEVDVDCVSDGKDVVIGGIMQHVEQAGIHSGDSGCSLPPYSLSEEIQDEIRRQTKAMAYALGVVGLMNVQFAVQDGVVFVLEVNPRASRTVPFVSKATGVPLAKVGARCMAGISLKEQGVEKEVVPDFYAVKEAVFPFIKFPGVDTILGPEMRSTGEVMGVGASFGEAYYKAQLGAGERLNPTGKIFLSVREEDKERVIKTAKNFQVLGYGICATRGTAQYLTEHGLIVQTINKVPEGRPHIGDALKNGEIALVVNTVSSDPQSVSDSHIIRQSALQQRVPQYTTTAGGEAMSEGAKSRDHLGVYSVQELHGRLKNRN</sequence>
<organism>
    <name type="scientific">Neisseria meningitidis serogroup B (strain ATCC BAA-335 / MC58)</name>
    <dbReference type="NCBI Taxonomy" id="122586"/>
    <lineage>
        <taxon>Bacteria</taxon>
        <taxon>Pseudomonadati</taxon>
        <taxon>Pseudomonadota</taxon>
        <taxon>Betaproteobacteria</taxon>
        <taxon>Neisseriales</taxon>
        <taxon>Neisseriaceae</taxon>
        <taxon>Neisseria</taxon>
    </lineage>
</organism>
<feature type="chain" id="PRO_0000145026" description="Carbamoyl phosphate synthase large chain">
    <location>
        <begin position="1"/>
        <end position="1071"/>
    </location>
</feature>
<feature type="domain" description="ATP-grasp 1" evidence="1">
    <location>
        <begin position="133"/>
        <end position="328"/>
    </location>
</feature>
<feature type="domain" description="ATP-grasp 2" evidence="1">
    <location>
        <begin position="673"/>
        <end position="864"/>
    </location>
</feature>
<feature type="domain" description="MGS-like" evidence="1">
    <location>
        <begin position="931"/>
        <end position="1071"/>
    </location>
</feature>
<feature type="region of interest" description="Carboxyphosphate synthetic domain" evidence="1">
    <location>
        <begin position="1"/>
        <end position="403"/>
    </location>
</feature>
<feature type="region of interest" description="Oligomerization domain" evidence="1">
    <location>
        <begin position="404"/>
        <end position="548"/>
    </location>
</feature>
<feature type="region of interest" description="Carbamoyl phosphate synthetic domain" evidence="1">
    <location>
        <begin position="549"/>
        <end position="930"/>
    </location>
</feature>
<feature type="region of interest" description="Allosteric domain" evidence="1">
    <location>
        <begin position="931"/>
        <end position="1071"/>
    </location>
</feature>
<feature type="binding site" evidence="1">
    <location>
        <position position="129"/>
    </location>
    <ligand>
        <name>ATP</name>
        <dbReference type="ChEBI" id="CHEBI:30616"/>
        <label>1</label>
    </ligand>
</feature>
<feature type="binding site" evidence="1">
    <location>
        <position position="169"/>
    </location>
    <ligand>
        <name>ATP</name>
        <dbReference type="ChEBI" id="CHEBI:30616"/>
        <label>1</label>
    </ligand>
</feature>
<feature type="binding site" evidence="1">
    <location>
        <position position="175"/>
    </location>
    <ligand>
        <name>ATP</name>
        <dbReference type="ChEBI" id="CHEBI:30616"/>
        <label>1</label>
    </ligand>
</feature>
<feature type="binding site" evidence="1">
    <location>
        <position position="176"/>
    </location>
    <ligand>
        <name>ATP</name>
        <dbReference type="ChEBI" id="CHEBI:30616"/>
        <label>1</label>
    </ligand>
</feature>
<feature type="binding site" evidence="1">
    <location>
        <position position="208"/>
    </location>
    <ligand>
        <name>ATP</name>
        <dbReference type="ChEBI" id="CHEBI:30616"/>
        <label>1</label>
    </ligand>
</feature>
<feature type="binding site" evidence="1">
    <location>
        <position position="210"/>
    </location>
    <ligand>
        <name>ATP</name>
        <dbReference type="ChEBI" id="CHEBI:30616"/>
        <label>1</label>
    </ligand>
</feature>
<feature type="binding site" evidence="1">
    <location>
        <position position="215"/>
    </location>
    <ligand>
        <name>ATP</name>
        <dbReference type="ChEBI" id="CHEBI:30616"/>
        <label>1</label>
    </ligand>
</feature>
<feature type="binding site" evidence="1">
    <location>
        <position position="241"/>
    </location>
    <ligand>
        <name>ATP</name>
        <dbReference type="ChEBI" id="CHEBI:30616"/>
        <label>1</label>
    </ligand>
</feature>
<feature type="binding site" evidence="1">
    <location>
        <position position="242"/>
    </location>
    <ligand>
        <name>ATP</name>
        <dbReference type="ChEBI" id="CHEBI:30616"/>
        <label>1</label>
    </ligand>
</feature>
<feature type="binding site" evidence="1">
    <location>
        <position position="243"/>
    </location>
    <ligand>
        <name>ATP</name>
        <dbReference type="ChEBI" id="CHEBI:30616"/>
        <label>1</label>
    </ligand>
</feature>
<feature type="binding site" evidence="1">
    <location>
        <position position="285"/>
    </location>
    <ligand>
        <name>ATP</name>
        <dbReference type="ChEBI" id="CHEBI:30616"/>
        <label>1</label>
    </ligand>
</feature>
<feature type="binding site" evidence="1">
    <location>
        <position position="285"/>
    </location>
    <ligand>
        <name>Mg(2+)</name>
        <dbReference type="ChEBI" id="CHEBI:18420"/>
        <label>1</label>
    </ligand>
</feature>
<feature type="binding site" evidence="1">
    <location>
        <position position="285"/>
    </location>
    <ligand>
        <name>Mn(2+)</name>
        <dbReference type="ChEBI" id="CHEBI:29035"/>
        <label>1</label>
    </ligand>
</feature>
<feature type="binding site" evidence="1">
    <location>
        <position position="299"/>
    </location>
    <ligand>
        <name>ATP</name>
        <dbReference type="ChEBI" id="CHEBI:30616"/>
        <label>1</label>
    </ligand>
</feature>
<feature type="binding site" evidence="1">
    <location>
        <position position="299"/>
    </location>
    <ligand>
        <name>Mg(2+)</name>
        <dbReference type="ChEBI" id="CHEBI:18420"/>
        <label>1</label>
    </ligand>
</feature>
<feature type="binding site" evidence="1">
    <location>
        <position position="299"/>
    </location>
    <ligand>
        <name>Mg(2+)</name>
        <dbReference type="ChEBI" id="CHEBI:18420"/>
        <label>2</label>
    </ligand>
</feature>
<feature type="binding site" evidence="1">
    <location>
        <position position="299"/>
    </location>
    <ligand>
        <name>Mn(2+)</name>
        <dbReference type="ChEBI" id="CHEBI:29035"/>
        <label>1</label>
    </ligand>
</feature>
<feature type="binding site" evidence="1">
    <location>
        <position position="299"/>
    </location>
    <ligand>
        <name>Mn(2+)</name>
        <dbReference type="ChEBI" id="CHEBI:29035"/>
        <label>2</label>
    </ligand>
</feature>
<feature type="binding site" evidence="1">
    <location>
        <position position="301"/>
    </location>
    <ligand>
        <name>Mg(2+)</name>
        <dbReference type="ChEBI" id="CHEBI:18420"/>
        <label>2</label>
    </ligand>
</feature>
<feature type="binding site" evidence="1">
    <location>
        <position position="301"/>
    </location>
    <ligand>
        <name>Mn(2+)</name>
        <dbReference type="ChEBI" id="CHEBI:29035"/>
        <label>2</label>
    </ligand>
</feature>
<feature type="binding site" evidence="1">
    <location>
        <position position="709"/>
    </location>
    <ligand>
        <name>ATP</name>
        <dbReference type="ChEBI" id="CHEBI:30616"/>
        <label>2</label>
    </ligand>
</feature>
<feature type="binding site" evidence="1">
    <location>
        <position position="748"/>
    </location>
    <ligand>
        <name>ATP</name>
        <dbReference type="ChEBI" id="CHEBI:30616"/>
        <label>2</label>
    </ligand>
</feature>
<feature type="binding site" evidence="1">
    <location>
        <position position="750"/>
    </location>
    <ligand>
        <name>ATP</name>
        <dbReference type="ChEBI" id="CHEBI:30616"/>
        <label>2</label>
    </ligand>
</feature>
<feature type="binding site" evidence="1">
    <location>
        <position position="755"/>
    </location>
    <ligand>
        <name>ATP</name>
        <dbReference type="ChEBI" id="CHEBI:30616"/>
        <label>2</label>
    </ligand>
</feature>
<feature type="binding site" evidence="1">
    <location>
        <position position="780"/>
    </location>
    <ligand>
        <name>ATP</name>
        <dbReference type="ChEBI" id="CHEBI:30616"/>
        <label>2</label>
    </ligand>
</feature>
<feature type="binding site" evidence="1">
    <location>
        <position position="781"/>
    </location>
    <ligand>
        <name>ATP</name>
        <dbReference type="ChEBI" id="CHEBI:30616"/>
        <label>2</label>
    </ligand>
</feature>
<feature type="binding site" evidence="1">
    <location>
        <position position="782"/>
    </location>
    <ligand>
        <name>ATP</name>
        <dbReference type="ChEBI" id="CHEBI:30616"/>
        <label>2</label>
    </ligand>
</feature>
<feature type="binding site" evidence="1">
    <location>
        <position position="783"/>
    </location>
    <ligand>
        <name>ATP</name>
        <dbReference type="ChEBI" id="CHEBI:30616"/>
        <label>2</label>
    </ligand>
</feature>
<feature type="binding site" evidence="1">
    <location>
        <position position="823"/>
    </location>
    <ligand>
        <name>ATP</name>
        <dbReference type="ChEBI" id="CHEBI:30616"/>
        <label>2</label>
    </ligand>
</feature>
<feature type="binding site" evidence="1">
    <location>
        <position position="823"/>
    </location>
    <ligand>
        <name>Mg(2+)</name>
        <dbReference type="ChEBI" id="CHEBI:18420"/>
        <label>3</label>
    </ligand>
</feature>
<feature type="binding site" evidence="1">
    <location>
        <position position="823"/>
    </location>
    <ligand>
        <name>Mn(2+)</name>
        <dbReference type="ChEBI" id="CHEBI:29035"/>
        <label>3</label>
    </ligand>
</feature>
<feature type="binding site" evidence="1">
    <location>
        <position position="835"/>
    </location>
    <ligand>
        <name>ATP</name>
        <dbReference type="ChEBI" id="CHEBI:30616"/>
        <label>2</label>
    </ligand>
</feature>
<feature type="binding site" evidence="1">
    <location>
        <position position="835"/>
    </location>
    <ligand>
        <name>Mg(2+)</name>
        <dbReference type="ChEBI" id="CHEBI:18420"/>
        <label>3</label>
    </ligand>
</feature>
<feature type="binding site" evidence="1">
    <location>
        <position position="835"/>
    </location>
    <ligand>
        <name>Mg(2+)</name>
        <dbReference type="ChEBI" id="CHEBI:18420"/>
        <label>4</label>
    </ligand>
</feature>
<feature type="binding site" evidence="1">
    <location>
        <position position="835"/>
    </location>
    <ligand>
        <name>Mn(2+)</name>
        <dbReference type="ChEBI" id="CHEBI:29035"/>
        <label>3</label>
    </ligand>
</feature>
<feature type="binding site" evidence="1">
    <location>
        <position position="835"/>
    </location>
    <ligand>
        <name>Mn(2+)</name>
        <dbReference type="ChEBI" id="CHEBI:29035"/>
        <label>4</label>
    </ligand>
</feature>
<feature type="binding site" evidence="1">
    <location>
        <position position="837"/>
    </location>
    <ligand>
        <name>Mg(2+)</name>
        <dbReference type="ChEBI" id="CHEBI:18420"/>
        <label>4</label>
    </ligand>
</feature>
<feature type="binding site" evidence="1">
    <location>
        <position position="837"/>
    </location>
    <ligand>
        <name>Mn(2+)</name>
        <dbReference type="ChEBI" id="CHEBI:29035"/>
        <label>4</label>
    </ligand>
</feature>
<evidence type="ECO:0000255" key="1">
    <source>
        <dbReference type="HAMAP-Rule" id="MF_01210"/>
    </source>
</evidence>
<gene>
    <name evidence="1" type="primary">carB</name>
    <name type="ordered locus">NMB1855</name>
</gene>
<keyword id="KW-0028">Amino-acid biosynthesis</keyword>
<keyword id="KW-0055">Arginine biosynthesis</keyword>
<keyword id="KW-0067">ATP-binding</keyword>
<keyword id="KW-0436">Ligase</keyword>
<keyword id="KW-0460">Magnesium</keyword>
<keyword id="KW-0464">Manganese</keyword>
<keyword id="KW-0479">Metal-binding</keyword>
<keyword id="KW-0547">Nucleotide-binding</keyword>
<keyword id="KW-0665">Pyrimidine biosynthesis</keyword>
<keyword id="KW-1185">Reference proteome</keyword>
<keyword id="KW-0677">Repeat</keyword>
<dbReference type="EC" id="6.3.4.16" evidence="1"/>
<dbReference type="EC" id="6.3.5.5" evidence="1"/>
<dbReference type="EMBL" id="AE002098">
    <property type="protein sequence ID" value="AAF42189.1"/>
    <property type="molecule type" value="Genomic_DNA"/>
</dbReference>
<dbReference type="PIR" id="D81035">
    <property type="entry name" value="D81035"/>
</dbReference>
<dbReference type="RefSeq" id="NP_274851.1">
    <property type="nucleotide sequence ID" value="NC_003112.2"/>
</dbReference>
<dbReference type="RefSeq" id="WP_002225779.1">
    <property type="nucleotide sequence ID" value="NC_003112.2"/>
</dbReference>
<dbReference type="SMR" id="Q9JXW8"/>
<dbReference type="FunCoup" id="Q9JXW8">
    <property type="interactions" value="522"/>
</dbReference>
<dbReference type="STRING" id="122586.NMB1855"/>
<dbReference type="PaxDb" id="122586-NMB1855"/>
<dbReference type="KEGG" id="nme:NMB1855"/>
<dbReference type="PATRIC" id="fig|122586.8.peg.2372"/>
<dbReference type="HOGENOM" id="CLU_000513_1_3_4"/>
<dbReference type="InParanoid" id="Q9JXW8"/>
<dbReference type="OrthoDB" id="9804197at2"/>
<dbReference type="UniPathway" id="UPA00068">
    <property type="reaction ID" value="UER00171"/>
</dbReference>
<dbReference type="UniPathway" id="UPA00070">
    <property type="reaction ID" value="UER00115"/>
</dbReference>
<dbReference type="Proteomes" id="UP000000425">
    <property type="component" value="Chromosome"/>
</dbReference>
<dbReference type="GO" id="GO:0005737">
    <property type="term" value="C:cytoplasm"/>
    <property type="evidence" value="ECO:0000318"/>
    <property type="project" value="GO_Central"/>
</dbReference>
<dbReference type="GO" id="GO:0005524">
    <property type="term" value="F:ATP binding"/>
    <property type="evidence" value="ECO:0007669"/>
    <property type="project" value="UniProtKB-UniRule"/>
</dbReference>
<dbReference type="GO" id="GO:0004087">
    <property type="term" value="F:carbamoyl-phosphate synthase (ammonia) activity"/>
    <property type="evidence" value="ECO:0007669"/>
    <property type="project" value="RHEA"/>
</dbReference>
<dbReference type="GO" id="GO:0004088">
    <property type="term" value="F:carbamoyl-phosphate synthase (glutamine-hydrolyzing) activity"/>
    <property type="evidence" value="ECO:0007669"/>
    <property type="project" value="UniProtKB-UniRule"/>
</dbReference>
<dbReference type="GO" id="GO:0003677">
    <property type="term" value="F:DNA binding"/>
    <property type="evidence" value="ECO:0007669"/>
    <property type="project" value="InterPro"/>
</dbReference>
<dbReference type="GO" id="GO:0046872">
    <property type="term" value="F:metal ion binding"/>
    <property type="evidence" value="ECO:0007669"/>
    <property type="project" value="UniProtKB-KW"/>
</dbReference>
<dbReference type="GO" id="GO:0044205">
    <property type="term" value="P:'de novo' UMP biosynthetic process"/>
    <property type="evidence" value="ECO:0007669"/>
    <property type="project" value="UniProtKB-UniRule"/>
</dbReference>
<dbReference type="GO" id="GO:0006541">
    <property type="term" value="P:glutamine metabolic process"/>
    <property type="evidence" value="ECO:0000318"/>
    <property type="project" value="GO_Central"/>
</dbReference>
<dbReference type="GO" id="GO:0006526">
    <property type="term" value="P:L-arginine biosynthetic process"/>
    <property type="evidence" value="ECO:0007669"/>
    <property type="project" value="UniProtKB-UniRule"/>
</dbReference>
<dbReference type="GO" id="GO:0006355">
    <property type="term" value="P:regulation of DNA-templated transcription"/>
    <property type="evidence" value="ECO:0007669"/>
    <property type="project" value="InterPro"/>
</dbReference>
<dbReference type="CDD" id="cd01424">
    <property type="entry name" value="MGS_CPS_II"/>
    <property type="match status" value="1"/>
</dbReference>
<dbReference type="FunFam" id="1.10.1030.10:FF:000002">
    <property type="entry name" value="Carbamoyl-phosphate synthase large chain"/>
    <property type="match status" value="1"/>
</dbReference>
<dbReference type="FunFam" id="3.30.1490.20:FF:000001">
    <property type="entry name" value="Carbamoyl-phosphate synthase large chain"/>
    <property type="match status" value="1"/>
</dbReference>
<dbReference type="FunFam" id="3.30.470.20:FF:000007">
    <property type="entry name" value="Carbamoyl-phosphate synthase large chain"/>
    <property type="match status" value="1"/>
</dbReference>
<dbReference type="FunFam" id="3.30.470.20:FF:000013">
    <property type="entry name" value="Carbamoyl-phosphate synthase large chain"/>
    <property type="match status" value="1"/>
</dbReference>
<dbReference type="FunFam" id="3.40.50.20:FF:000001">
    <property type="entry name" value="Carbamoyl-phosphate synthase large chain"/>
    <property type="match status" value="1"/>
</dbReference>
<dbReference type="FunFam" id="3.40.50.20:FF:000003">
    <property type="entry name" value="Carbamoyl-phosphate synthase large chain"/>
    <property type="match status" value="1"/>
</dbReference>
<dbReference type="Gene3D" id="3.40.50.20">
    <property type="match status" value="2"/>
</dbReference>
<dbReference type="Gene3D" id="3.30.470.20">
    <property type="entry name" value="ATP-grasp fold, B domain"/>
    <property type="match status" value="2"/>
</dbReference>
<dbReference type="Gene3D" id="1.10.1030.10">
    <property type="entry name" value="Carbamoyl-phosphate synthetase, large subunit oligomerisation domain"/>
    <property type="match status" value="1"/>
</dbReference>
<dbReference type="Gene3D" id="3.40.50.1380">
    <property type="entry name" value="Methylglyoxal synthase-like domain"/>
    <property type="match status" value="1"/>
</dbReference>
<dbReference type="HAMAP" id="MF_01210_A">
    <property type="entry name" value="CPSase_L_chain_A"/>
    <property type="match status" value="1"/>
</dbReference>
<dbReference type="HAMAP" id="MF_01210_B">
    <property type="entry name" value="CPSase_L_chain_B"/>
    <property type="match status" value="1"/>
</dbReference>
<dbReference type="InterPro" id="IPR011761">
    <property type="entry name" value="ATP-grasp"/>
</dbReference>
<dbReference type="InterPro" id="IPR006275">
    <property type="entry name" value="CarbamoylP_synth_lsu"/>
</dbReference>
<dbReference type="InterPro" id="IPR005480">
    <property type="entry name" value="CarbamoylP_synth_lsu_oligo"/>
</dbReference>
<dbReference type="InterPro" id="IPR036897">
    <property type="entry name" value="CarbamoylP_synth_lsu_oligo_sf"/>
</dbReference>
<dbReference type="InterPro" id="IPR005479">
    <property type="entry name" value="CbamoylP_synth_lsu-like_ATP-bd"/>
</dbReference>
<dbReference type="InterPro" id="IPR005483">
    <property type="entry name" value="CbamoylP_synth_lsu_CPSase_dom"/>
</dbReference>
<dbReference type="InterPro" id="IPR000551">
    <property type="entry name" value="MerR-type_HTH_dom"/>
</dbReference>
<dbReference type="InterPro" id="IPR011607">
    <property type="entry name" value="MGS-like_dom"/>
</dbReference>
<dbReference type="InterPro" id="IPR036914">
    <property type="entry name" value="MGS-like_dom_sf"/>
</dbReference>
<dbReference type="InterPro" id="IPR033937">
    <property type="entry name" value="MGS_CPS_CarB"/>
</dbReference>
<dbReference type="InterPro" id="IPR016185">
    <property type="entry name" value="PreATP-grasp_dom_sf"/>
</dbReference>
<dbReference type="NCBIfam" id="TIGR01369">
    <property type="entry name" value="CPSaseII_lrg"/>
    <property type="match status" value="1"/>
</dbReference>
<dbReference type="NCBIfam" id="NF003671">
    <property type="entry name" value="PRK05294.1"/>
    <property type="match status" value="1"/>
</dbReference>
<dbReference type="NCBIfam" id="NF009455">
    <property type="entry name" value="PRK12815.1"/>
    <property type="match status" value="1"/>
</dbReference>
<dbReference type="PANTHER" id="PTHR11405:SF53">
    <property type="entry name" value="CARBAMOYL-PHOSPHATE SYNTHASE [AMMONIA], MITOCHONDRIAL"/>
    <property type="match status" value="1"/>
</dbReference>
<dbReference type="PANTHER" id="PTHR11405">
    <property type="entry name" value="CARBAMOYLTRANSFERASE FAMILY MEMBER"/>
    <property type="match status" value="1"/>
</dbReference>
<dbReference type="Pfam" id="PF02786">
    <property type="entry name" value="CPSase_L_D2"/>
    <property type="match status" value="2"/>
</dbReference>
<dbReference type="Pfam" id="PF02787">
    <property type="entry name" value="CPSase_L_D3"/>
    <property type="match status" value="1"/>
</dbReference>
<dbReference type="Pfam" id="PF02142">
    <property type="entry name" value="MGS"/>
    <property type="match status" value="1"/>
</dbReference>
<dbReference type="PRINTS" id="PR00098">
    <property type="entry name" value="CPSASE"/>
</dbReference>
<dbReference type="SMART" id="SM01096">
    <property type="entry name" value="CPSase_L_D3"/>
    <property type="match status" value="1"/>
</dbReference>
<dbReference type="SMART" id="SM00851">
    <property type="entry name" value="MGS"/>
    <property type="match status" value="1"/>
</dbReference>
<dbReference type="SUPFAM" id="SSF48108">
    <property type="entry name" value="Carbamoyl phosphate synthetase, large subunit connection domain"/>
    <property type="match status" value="1"/>
</dbReference>
<dbReference type="SUPFAM" id="SSF56059">
    <property type="entry name" value="Glutathione synthetase ATP-binding domain-like"/>
    <property type="match status" value="2"/>
</dbReference>
<dbReference type="SUPFAM" id="SSF52335">
    <property type="entry name" value="Methylglyoxal synthase-like"/>
    <property type="match status" value="1"/>
</dbReference>
<dbReference type="SUPFAM" id="SSF52440">
    <property type="entry name" value="PreATP-grasp domain"/>
    <property type="match status" value="2"/>
</dbReference>
<dbReference type="PROSITE" id="PS50975">
    <property type="entry name" value="ATP_GRASP"/>
    <property type="match status" value="2"/>
</dbReference>
<dbReference type="PROSITE" id="PS00866">
    <property type="entry name" value="CPSASE_1"/>
    <property type="match status" value="1"/>
</dbReference>
<dbReference type="PROSITE" id="PS00867">
    <property type="entry name" value="CPSASE_2"/>
    <property type="match status" value="2"/>
</dbReference>
<dbReference type="PROSITE" id="PS51855">
    <property type="entry name" value="MGS"/>
    <property type="match status" value="1"/>
</dbReference>
<accession>Q9JXW8</accession>
<reference key="1">
    <citation type="journal article" date="2000" name="Science">
        <title>Complete genome sequence of Neisseria meningitidis serogroup B strain MC58.</title>
        <authorList>
            <person name="Tettelin H."/>
            <person name="Saunders N.J."/>
            <person name="Heidelberg J.F."/>
            <person name="Jeffries A.C."/>
            <person name="Nelson K.E."/>
            <person name="Eisen J.A."/>
            <person name="Ketchum K.A."/>
            <person name="Hood D.W."/>
            <person name="Peden J.F."/>
            <person name="Dodson R.J."/>
            <person name="Nelson W.C."/>
            <person name="Gwinn M.L."/>
            <person name="DeBoy R.T."/>
            <person name="Peterson J.D."/>
            <person name="Hickey E.K."/>
            <person name="Haft D.H."/>
            <person name="Salzberg S.L."/>
            <person name="White O."/>
            <person name="Fleischmann R.D."/>
            <person name="Dougherty B.A."/>
            <person name="Mason T.M."/>
            <person name="Ciecko A."/>
            <person name="Parksey D.S."/>
            <person name="Blair E."/>
            <person name="Cittone H."/>
            <person name="Clark E.B."/>
            <person name="Cotton M.D."/>
            <person name="Utterback T.R."/>
            <person name="Khouri H.M."/>
            <person name="Qin H."/>
            <person name="Vamathevan J.J."/>
            <person name="Gill J."/>
            <person name="Scarlato V."/>
            <person name="Masignani V."/>
            <person name="Pizza M."/>
            <person name="Grandi G."/>
            <person name="Sun L."/>
            <person name="Smith H.O."/>
            <person name="Fraser C.M."/>
            <person name="Moxon E.R."/>
            <person name="Rappuoli R."/>
            <person name="Venter J.C."/>
        </authorList>
    </citation>
    <scope>NUCLEOTIDE SEQUENCE [LARGE SCALE GENOMIC DNA]</scope>
    <source>
        <strain>ATCC BAA-335 / MC58</strain>
    </source>
</reference>
<comment type="function">
    <text evidence="1">Large subunit of the glutamine-dependent carbamoyl phosphate synthetase (CPSase). CPSase catalyzes the formation of carbamoyl phosphate from the ammonia moiety of glutamine, carbonate, and phosphate donated by ATP, constituting the first step of 2 biosynthetic pathways, one leading to arginine and/or urea and the other to pyrimidine nucleotides. The large subunit (synthetase) binds the substrates ammonia (free or transferred from glutamine from the small subunit), hydrogencarbonate and ATP and carries out an ATP-coupled ligase reaction, activating hydrogencarbonate by forming carboxy phosphate which reacts with ammonia to form carbamoyl phosphate.</text>
</comment>
<comment type="catalytic activity">
    <reaction evidence="1">
        <text>hydrogencarbonate + L-glutamine + 2 ATP + H2O = carbamoyl phosphate + L-glutamate + 2 ADP + phosphate + 2 H(+)</text>
        <dbReference type="Rhea" id="RHEA:18633"/>
        <dbReference type="ChEBI" id="CHEBI:15377"/>
        <dbReference type="ChEBI" id="CHEBI:15378"/>
        <dbReference type="ChEBI" id="CHEBI:17544"/>
        <dbReference type="ChEBI" id="CHEBI:29985"/>
        <dbReference type="ChEBI" id="CHEBI:30616"/>
        <dbReference type="ChEBI" id="CHEBI:43474"/>
        <dbReference type="ChEBI" id="CHEBI:58228"/>
        <dbReference type="ChEBI" id="CHEBI:58359"/>
        <dbReference type="ChEBI" id="CHEBI:456216"/>
        <dbReference type="EC" id="6.3.5.5"/>
    </reaction>
</comment>
<comment type="catalytic activity">
    <molecule>Carbamoyl phosphate synthase large chain</molecule>
    <reaction evidence="1">
        <text>hydrogencarbonate + NH4(+) + 2 ATP = carbamoyl phosphate + 2 ADP + phosphate + 2 H(+)</text>
        <dbReference type="Rhea" id="RHEA:18029"/>
        <dbReference type="ChEBI" id="CHEBI:15378"/>
        <dbReference type="ChEBI" id="CHEBI:17544"/>
        <dbReference type="ChEBI" id="CHEBI:28938"/>
        <dbReference type="ChEBI" id="CHEBI:30616"/>
        <dbReference type="ChEBI" id="CHEBI:43474"/>
        <dbReference type="ChEBI" id="CHEBI:58228"/>
        <dbReference type="ChEBI" id="CHEBI:456216"/>
        <dbReference type="EC" id="6.3.4.16"/>
    </reaction>
</comment>
<comment type="cofactor">
    <cofactor evidence="1">
        <name>Mg(2+)</name>
        <dbReference type="ChEBI" id="CHEBI:18420"/>
    </cofactor>
    <cofactor evidence="1">
        <name>Mn(2+)</name>
        <dbReference type="ChEBI" id="CHEBI:29035"/>
    </cofactor>
    <text evidence="1">Binds 4 Mg(2+) or Mn(2+) ions per subunit.</text>
</comment>
<comment type="pathway">
    <text evidence="1">Amino-acid biosynthesis; L-arginine biosynthesis; carbamoyl phosphate from bicarbonate: step 1/1.</text>
</comment>
<comment type="pathway">
    <text evidence="1">Pyrimidine metabolism; UMP biosynthesis via de novo pathway; (S)-dihydroorotate from bicarbonate: step 1/3.</text>
</comment>
<comment type="subunit">
    <text evidence="1">Composed of two chains; the small (or glutamine) chain promotes the hydrolysis of glutamine to ammonia, which is used by the large (or ammonia) chain to synthesize carbamoyl phosphate. Tetramer of heterodimers (alpha,beta)4.</text>
</comment>
<comment type="domain">
    <text evidence="1">The large subunit is composed of 2 ATP-grasp domains that are involved in binding the 2 ATP molecules needed for carbamoyl phosphate synthesis. The N-terminal ATP-grasp domain (referred to as the carboxyphosphate synthetic component) catalyzes the ATP-dependent phosphorylation of hydrogencarbonate to carboxyphosphate and the subsequent nucleophilic attack by ammonia to form a carbamate intermediate. The C-terminal ATP-grasp domain (referred to as the carbamoyl phosphate synthetic component) then catalyzes the phosphorylation of carbamate with the second ATP to form the end product carbamoyl phosphate. The reactive and unstable enzyme intermediates are sequentially channeled from one active site to the next through the interior of the protein over a distance of at least 96 A.</text>
</comment>
<comment type="similarity">
    <text evidence="1">Belongs to the CarB family.</text>
</comment>
<proteinExistence type="inferred from homology"/>